<keyword id="KW-0256">Endoplasmic reticulum</keyword>
<keyword id="KW-0325">Glycoprotein</keyword>
<keyword id="KW-0378">Hydrolase</keyword>
<keyword id="KW-0442">Lipid degradation</keyword>
<keyword id="KW-0443">Lipid metabolism</keyword>
<keyword id="KW-0472">Membrane</keyword>
<keyword id="KW-0496">Mitochondrion</keyword>
<keyword id="KW-0576">Peroxisome</keyword>
<keyword id="KW-1185">Reference proteome</keyword>
<keyword id="KW-0812">Transmembrane</keyword>
<keyword id="KW-1133">Transmembrane helix</keyword>
<organism>
    <name type="scientific">Oryctolagus cuniculus</name>
    <name type="common">Rabbit</name>
    <dbReference type="NCBI Taxonomy" id="9986"/>
    <lineage>
        <taxon>Eukaryota</taxon>
        <taxon>Metazoa</taxon>
        <taxon>Chordata</taxon>
        <taxon>Craniata</taxon>
        <taxon>Vertebrata</taxon>
        <taxon>Euteleostomi</taxon>
        <taxon>Mammalia</taxon>
        <taxon>Eutheria</taxon>
        <taxon>Euarchontoglires</taxon>
        <taxon>Glires</taxon>
        <taxon>Lagomorpha</taxon>
        <taxon>Leporidae</taxon>
        <taxon>Oryctolagus</taxon>
    </lineage>
</organism>
<protein>
    <recommendedName>
        <fullName evidence="8">Calcium-independent phospholipase A2-gamma</fullName>
        <ecNumber evidence="2">3.1.1.-</ecNumber>
        <ecNumber evidence="2">3.1.1.5</ecNumber>
    </recommendedName>
    <alternativeName>
        <fullName evidence="7">Group VIB calcium-independent phospholipase A2</fullName>
    </alternativeName>
    <alternativeName>
        <fullName evidence="7">Intracellular membrane-associated calcium-independent phospholipase A2 gamma</fullName>
        <shortName evidence="7">iPLA2-gamma</shortName>
    </alternativeName>
    <alternativeName>
        <fullName>Patatin-like phospholipase domain-containing protein 8</fullName>
    </alternativeName>
</protein>
<dbReference type="EC" id="3.1.1.-" evidence="2"/>
<dbReference type="EC" id="3.1.1.5" evidence="2"/>
<dbReference type="EMBL" id="AY738591">
    <property type="protein sequence ID" value="AAU85256.1"/>
    <property type="molecule type" value="mRNA"/>
</dbReference>
<dbReference type="RefSeq" id="NP_001164743.1">
    <property type="nucleotide sequence ID" value="NM_001171272.1"/>
</dbReference>
<dbReference type="SMR" id="Q5XTS1"/>
<dbReference type="FunCoup" id="Q5XTS1">
    <property type="interactions" value="1090"/>
</dbReference>
<dbReference type="STRING" id="9986.ENSOCUP00000019643"/>
<dbReference type="GlyCosmos" id="Q5XTS1">
    <property type="glycosylation" value="1 site, No reported glycans"/>
</dbReference>
<dbReference type="PaxDb" id="9986-ENSOCUP00000019643"/>
<dbReference type="GeneID" id="100328577"/>
<dbReference type="KEGG" id="ocu:100328577"/>
<dbReference type="CTD" id="50640"/>
<dbReference type="eggNOG" id="KOG4231">
    <property type="taxonomic scope" value="Eukaryota"/>
</dbReference>
<dbReference type="InParanoid" id="Q5XTS1"/>
<dbReference type="OrthoDB" id="630895at2759"/>
<dbReference type="Proteomes" id="UP000001811">
    <property type="component" value="Unplaced"/>
</dbReference>
<dbReference type="GO" id="GO:0005789">
    <property type="term" value="C:endoplasmic reticulum membrane"/>
    <property type="evidence" value="ECO:0007669"/>
    <property type="project" value="UniProtKB-SubCell"/>
</dbReference>
<dbReference type="GO" id="GO:0016020">
    <property type="term" value="C:membrane"/>
    <property type="evidence" value="ECO:0000250"/>
    <property type="project" value="UniProtKB"/>
</dbReference>
<dbReference type="GO" id="GO:0031966">
    <property type="term" value="C:mitochondrial membrane"/>
    <property type="evidence" value="ECO:0007669"/>
    <property type="project" value="UniProtKB-SubCell"/>
</dbReference>
<dbReference type="GO" id="GO:0005739">
    <property type="term" value="C:mitochondrion"/>
    <property type="evidence" value="ECO:0000250"/>
    <property type="project" value="UniProtKB"/>
</dbReference>
<dbReference type="GO" id="GO:0005778">
    <property type="term" value="C:peroxisomal membrane"/>
    <property type="evidence" value="ECO:0007669"/>
    <property type="project" value="UniProtKB-SubCell"/>
</dbReference>
<dbReference type="GO" id="GO:0005777">
    <property type="term" value="C:peroxisome"/>
    <property type="evidence" value="ECO:0000250"/>
    <property type="project" value="UniProtKB"/>
</dbReference>
<dbReference type="GO" id="GO:0047499">
    <property type="term" value="F:calcium-independent phospholipase A2 activity"/>
    <property type="evidence" value="ECO:0000250"/>
    <property type="project" value="UniProtKB"/>
</dbReference>
<dbReference type="GO" id="GO:0004622">
    <property type="term" value="F:lysophospholipase activity"/>
    <property type="evidence" value="ECO:0007669"/>
    <property type="project" value="UniProtKB-EC"/>
</dbReference>
<dbReference type="GO" id="GO:0008970">
    <property type="term" value="F:phospholipase A1 activity"/>
    <property type="evidence" value="ECO:0007669"/>
    <property type="project" value="RHEA"/>
</dbReference>
<dbReference type="GO" id="GO:0019369">
    <property type="term" value="P:arachidonate metabolic process"/>
    <property type="evidence" value="ECO:0000250"/>
    <property type="project" value="UniProtKB"/>
</dbReference>
<dbReference type="GO" id="GO:0032048">
    <property type="term" value="P:cardiolipin metabolic process"/>
    <property type="evidence" value="ECO:0000250"/>
    <property type="project" value="UniProtKB"/>
</dbReference>
<dbReference type="GO" id="GO:0016042">
    <property type="term" value="P:lipid catabolic process"/>
    <property type="evidence" value="ECO:0007669"/>
    <property type="project" value="UniProtKB-KW"/>
</dbReference>
<dbReference type="GO" id="GO:0055088">
    <property type="term" value="P:lipid homeostasis"/>
    <property type="evidence" value="ECO:0000250"/>
    <property type="project" value="UniProtKB"/>
</dbReference>
<dbReference type="GO" id="GO:0070328">
    <property type="term" value="P:triglyceride homeostasis"/>
    <property type="evidence" value="ECO:0000250"/>
    <property type="project" value="UniProtKB"/>
</dbReference>
<dbReference type="CDD" id="cd07211">
    <property type="entry name" value="Pat_PNPLA8"/>
    <property type="match status" value="1"/>
</dbReference>
<dbReference type="FunFam" id="3.40.1090.10:FF:000012">
    <property type="entry name" value="calcium-independent phospholipase A2-gamma isoform X1"/>
    <property type="match status" value="1"/>
</dbReference>
<dbReference type="Gene3D" id="3.40.1090.10">
    <property type="entry name" value="Cytosolic phospholipase A2 catalytic domain"/>
    <property type="match status" value="1"/>
</dbReference>
<dbReference type="InterPro" id="IPR016035">
    <property type="entry name" value="Acyl_Trfase/lysoPLipase"/>
</dbReference>
<dbReference type="InterPro" id="IPR045217">
    <property type="entry name" value="PNPLA8-like"/>
</dbReference>
<dbReference type="InterPro" id="IPR002641">
    <property type="entry name" value="PNPLA_dom"/>
</dbReference>
<dbReference type="PANTHER" id="PTHR24185">
    <property type="entry name" value="CALCIUM-INDEPENDENT PHOSPHOLIPASE A2-GAMMA"/>
    <property type="match status" value="1"/>
</dbReference>
<dbReference type="PANTHER" id="PTHR24185:SF1">
    <property type="entry name" value="CALCIUM-INDEPENDENT PHOSPHOLIPASE A2-GAMMA"/>
    <property type="match status" value="1"/>
</dbReference>
<dbReference type="Pfam" id="PF01734">
    <property type="entry name" value="Patatin"/>
    <property type="match status" value="1"/>
</dbReference>
<dbReference type="SUPFAM" id="SSF52151">
    <property type="entry name" value="FabD/lysophospholipase-like"/>
    <property type="match status" value="1"/>
</dbReference>
<dbReference type="PROSITE" id="PS51635">
    <property type="entry name" value="PNPLA"/>
    <property type="match status" value="1"/>
</dbReference>
<reference key="1">
    <citation type="journal article" date="2005" name="Biochem. Biophys. Res. Commun.">
        <title>Identification and distribution of endoplasmic reticulum iPLA2.</title>
        <authorList>
            <person name="Kinsey G.R."/>
            <person name="Cummings B.S."/>
            <person name="Beckett C.S."/>
            <person name="Saavedra G."/>
            <person name="Zhang W."/>
            <person name="McHowat J."/>
            <person name="Schnellmann R.G."/>
        </authorList>
    </citation>
    <scope>NUCLEOTIDE SEQUENCE [MRNA]</scope>
    <scope>SUBCELLULAR LOCATION</scope>
    <scope>TOPOLOGY</scope>
    <scope>TISSUE SPECIFICITY</scope>
    <source>
        <tissue>Heart</tissue>
    </source>
</reference>
<proteinExistence type="evidence at protein level"/>
<gene>
    <name evidence="2" type="primary">PNPLA8</name>
</gene>
<sequence>MSINLTIDICIYLLSNARNLCGKHRSKQLHLVCSPNHCWKIRHVSLQRGLHPHKVRCKWTKSETHSCSKHYYSPSNHGLHIGILKLSTSAPKGLTKVSIRMSRIKSTLNSVSKAVFGSQNEMISRLAQFKPSSRILRKVSDSGWLKQESIKQAIRSLKKYSDKSTEKSPVPEGRNHIIDKEDDIGKQSLFHYTGNITTKFGESFYFLSNHINSYFKRAEKMSQDKENSHFQEKSELEGKKVEEGKSSSLDPGILTSQADKPDPKSSAGTMDKATSPSGTPESLPISTKQSIANFLSRPTEGVQALVGGYIGGLVPKLKYDSKSQAEEQEEPAKSEPAGSKDKTVEEKKHLSLQREKIIARVSIDNRTRALVQALRRTADPKLCITRVEELTFHLLEFPEGKGVAVKERLIPCLLRLRQMKDETLQAAVREILALIGYVDPVKGRGIRILTIDGGGTRGVVALQTLRKLVELTQKPVHQLFDYICGVSTGAILAFMLGLFHLPLDECEELYRKLGSDIFSQNVIVGTVKMSWSHAFYDSQTWEKILKERMGSALMIETARNPMCPKVAAVSTIVNRGSTPKAFVFRNYGHFPGSQSHYLGGCQYKMWQAIRASSAAPGYFAEYALGNDLHQDGGLLLNNPSALAMHECKCLWPDAPLECIVSLGTGRYESDVRNNTTYTSLKTKLSNVINSATDTEEVHIMLDGLLPPDTYFRFNPVMCENIPLDESRNEKLDQLQLEGSKYIERNEHKMKKVAKILSQEKTTLQKINDWIKLKTDMYEGLPFFSKL</sequence>
<feature type="chain" id="PRO_0000303216" description="Calcium-independent phospholipase A2-gamma">
    <location>
        <begin position="1"/>
        <end position="786"/>
    </location>
</feature>
<feature type="transmembrane region" description="Helical" evidence="3">
    <location>
        <begin position="483"/>
        <end position="503"/>
    </location>
</feature>
<feature type="domain" description="PNPLA" evidence="4">
    <location>
        <begin position="449"/>
        <end position="644"/>
    </location>
</feature>
<feature type="region of interest" description="Disordered" evidence="5">
    <location>
        <begin position="158"/>
        <end position="180"/>
    </location>
</feature>
<feature type="region of interest" description="Disordered" evidence="5">
    <location>
        <begin position="225"/>
        <end position="285"/>
    </location>
</feature>
<feature type="region of interest" description="Disordered" evidence="5">
    <location>
        <begin position="321"/>
        <end position="348"/>
    </location>
</feature>
<feature type="short sequence motif" description="GXGXXG" evidence="4">
    <location>
        <begin position="453"/>
        <end position="458"/>
    </location>
</feature>
<feature type="short sequence motif" description="GXSXG" evidence="4">
    <location>
        <begin position="485"/>
        <end position="489"/>
    </location>
</feature>
<feature type="short sequence motif" description="DGA/G" evidence="4">
    <location>
        <begin position="631"/>
        <end position="633"/>
    </location>
</feature>
<feature type="compositionally biased region" description="Basic and acidic residues" evidence="5">
    <location>
        <begin position="225"/>
        <end position="245"/>
    </location>
</feature>
<feature type="compositionally biased region" description="Polar residues" evidence="5">
    <location>
        <begin position="246"/>
        <end position="258"/>
    </location>
</feature>
<feature type="compositionally biased region" description="Polar residues" evidence="5">
    <location>
        <begin position="266"/>
        <end position="285"/>
    </location>
</feature>
<feature type="active site" description="Nucleophile" evidence="4">
    <location>
        <position position="487"/>
    </location>
</feature>
<feature type="active site" description="Proton acceptor" evidence="4">
    <location>
        <position position="631"/>
    </location>
</feature>
<feature type="modified residue" description="N6-succinyllysine" evidence="1">
    <location>
        <position position="740"/>
    </location>
</feature>
<feature type="glycosylation site" description="N-linked (GlcNAc...) asparagine" evidence="3">
    <location>
        <position position="4"/>
    </location>
</feature>
<name>PLPL8_RABIT</name>
<evidence type="ECO:0000250" key="1">
    <source>
        <dbReference type="UniProtKB" id="Q8K1N1"/>
    </source>
</evidence>
<evidence type="ECO:0000250" key="2">
    <source>
        <dbReference type="UniProtKB" id="Q9NP80"/>
    </source>
</evidence>
<evidence type="ECO:0000255" key="3"/>
<evidence type="ECO:0000255" key="4">
    <source>
        <dbReference type="PROSITE-ProRule" id="PRU01161"/>
    </source>
</evidence>
<evidence type="ECO:0000256" key="5">
    <source>
        <dbReference type="SAM" id="MobiDB-lite"/>
    </source>
</evidence>
<evidence type="ECO:0000269" key="6">
    <source>
    </source>
</evidence>
<evidence type="ECO:0000303" key="7">
    <source>
    </source>
</evidence>
<evidence type="ECO:0000305" key="8"/>
<evidence type="ECO:0000305" key="9">
    <source>
    </source>
</evidence>
<comment type="function">
    <text evidence="1 2">Calcium-independent and membrane-bound phospholipase, that catalyzes the esterolytic cleavage of fatty acids from glycerophospholipids to yield free fatty acids and lysophospholipids, hence regulating membrane physical properties and the release of lipid second messengers and growth factors. Hydrolyzes phosphatidylethanolamine, phosphatidylcholine and probably phosphatidylinositol with a possible preference for the former. Has also a broad substrate specificity in terms of fatty acid moieties, hydrolyzing saturated and mono-unsaturated fatty acids at nearly equal rates from either the sn-1 or sn-2 position in diacyl phosphatidylcholine. However, has a weak activity toward polyunsaturated fatty acids at the sn-2 position, and thereby favors the production of 2-arachidonoyl lysophosphatidylcholine, a key branch point metabolite in eicosanoid signaling. On the other hand, can produce arachidonic acid from the sn-1 position of diacyl phospholipid and from the sn-2 position of arachidonate-containing plasmalogen substrates. Therefore, plays an important role in the mobilization of arachidonic acid in response to cellular stimuli and the generation of lipid second messengers. Can also hydrolyze lysophosphatidylcholine. In the mitochondrial compartment, catalyzes the hydrolysis and release of oxidized aliphatic chains from cardiolipin and integrates mitochondrial bioenergetics and signaling. It is essential for maintaining efficient bioenergetic mitochondrial function through tailoring mitochondrial membrane lipid metabolism and composition.</text>
</comment>
<comment type="catalytic activity">
    <reaction evidence="2">
        <text>a 1,2-diacyl-sn-glycero-3-phosphocholine + H2O = a 1-acyl-sn-glycero-3-phosphocholine + a fatty acid + H(+)</text>
        <dbReference type="Rhea" id="RHEA:15801"/>
        <dbReference type="ChEBI" id="CHEBI:15377"/>
        <dbReference type="ChEBI" id="CHEBI:15378"/>
        <dbReference type="ChEBI" id="CHEBI:28868"/>
        <dbReference type="ChEBI" id="CHEBI:57643"/>
        <dbReference type="ChEBI" id="CHEBI:58168"/>
    </reaction>
    <physiologicalReaction direction="left-to-right" evidence="2">
        <dbReference type="Rhea" id="RHEA:15802"/>
    </physiologicalReaction>
</comment>
<comment type="catalytic activity">
    <reaction evidence="2">
        <text>a 1,2-diacyl-sn-glycero-3-phosphocholine + H2O = a 2-acyl-sn-glycero-3-phosphocholine + a fatty acid + H(+)</text>
        <dbReference type="Rhea" id="RHEA:18689"/>
        <dbReference type="ChEBI" id="CHEBI:15377"/>
        <dbReference type="ChEBI" id="CHEBI:15378"/>
        <dbReference type="ChEBI" id="CHEBI:28868"/>
        <dbReference type="ChEBI" id="CHEBI:57643"/>
        <dbReference type="ChEBI" id="CHEBI:57875"/>
    </reaction>
    <physiologicalReaction direction="left-to-right" evidence="2">
        <dbReference type="Rhea" id="RHEA:18690"/>
    </physiologicalReaction>
</comment>
<comment type="catalytic activity">
    <reaction evidence="2">
        <text>a 1,2-diacyl-sn-glycero-3-phosphoethanolamine + H2O = a 1-acyl-sn-glycero-3-phosphoethanolamine + a fatty acid + H(+)</text>
        <dbReference type="Rhea" id="RHEA:44604"/>
        <dbReference type="ChEBI" id="CHEBI:15377"/>
        <dbReference type="ChEBI" id="CHEBI:15378"/>
        <dbReference type="ChEBI" id="CHEBI:28868"/>
        <dbReference type="ChEBI" id="CHEBI:64381"/>
        <dbReference type="ChEBI" id="CHEBI:64612"/>
    </reaction>
    <physiologicalReaction direction="left-to-right" evidence="2">
        <dbReference type="Rhea" id="RHEA:44605"/>
    </physiologicalReaction>
</comment>
<comment type="catalytic activity">
    <reaction evidence="2">
        <text>a 1-O-(1Z-alkenyl)-2-acyl-sn-glycero-3-phosphocholine + H2O = a 1-O-(1Z-alkenyl)-sn-glycero-3-phosphocholine + a fatty acid + H(+)</text>
        <dbReference type="Rhea" id="RHEA:44068"/>
        <dbReference type="ChEBI" id="CHEBI:15377"/>
        <dbReference type="ChEBI" id="CHEBI:15378"/>
        <dbReference type="ChEBI" id="CHEBI:28868"/>
        <dbReference type="ChEBI" id="CHEBI:77286"/>
        <dbReference type="ChEBI" id="CHEBI:77287"/>
    </reaction>
    <physiologicalReaction direction="left-to-right" evidence="2">
        <dbReference type="Rhea" id="RHEA:44069"/>
    </physiologicalReaction>
</comment>
<comment type="catalytic activity">
    <reaction evidence="2">
        <text>a 1-acyl-sn-glycero-3-phosphocholine + H2O = sn-glycerol 3-phosphocholine + a fatty acid + H(+)</text>
        <dbReference type="Rhea" id="RHEA:15177"/>
        <dbReference type="ChEBI" id="CHEBI:15377"/>
        <dbReference type="ChEBI" id="CHEBI:15378"/>
        <dbReference type="ChEBI" id="CHEBI:16870"/>
        <dbReference type="ChEBI" id="CHEBI:28868"/>
        <dbReference type="ChEBI" id="CHEBI:58168"/>
        <dbReference type="EC" id="3.1.1.5"/>
    </reaction>
    <physiologicalReaction direction="left-to-right" evidence="2">
        <dbReference type="Rhea" id="RHEA:15178"/>
    </physiologicalReaction>
</comment>
<comment type="catalytic activity">
    <reaction evidence="2">
        <text>1-acyl-2-(9Z,12Z)-octadecadienoyl-sn-glycero-3-phosphocholine + H2O = a 1-acyl-sn-glycero-3-phosphocholine + (9Z,12Z)-octadecadienoate + H(+)</text>
        <dbReference type="Rhea" id="RHEA:40643"/>
        <dbReference type="ChEBI" id="CHEBI:15377"/>
        <dbReference type="ChEBI" id="CHEBI:15378"/>
        <dbReference type="ChEBI" id="CHEBI:30245"/>
        <dbReference type="ChEBI" id="CHEBI:58168"/>
        <dbReference type="ChEBI" id="CHEBI:60000"/>
    </reaction>
    <physiologicalReaction direction="left-to-right" evidence="2">
        <dbReference type="Rhea" id="RHEA:40644"/>
    </physiologicalReaction>
</comment>
<comment type="catalytic activity">
    <reaction evidence="2">
        <text>1-acyl-2-(5Z,8Z,11Z,14Z-eicosatetraenoyl)-sn-glycero-3-phosphocholine + H2O = a 1-acyl-sn-glycero-3-phosphocholine + (5Z,8Z,11Z,14Z)-eicosatetraenoate + H(+)</text>
        <dbReference type="Rhea" id="RHEA:40651"/>
        <dbReference type="ChEBI" id="CHEBI:15377"/>
        <dbReference type="ChEBI" id="CHEBI:15378"/>
        <dbReference type="ChEBI" id="CHEBI:32395"/>
        <dbReference type="ChEBI" id="CHEBI:58168"/>
        <dbReference type="ChEBI" id="CHEBI:75063"/>
    </reaction>
    <physiologicalReaction direction="left-to-right" evidence="2">
        <dbReference type="Rhea" id="RHEA:40652"/>
    </physiologicalReaction>
</comment>
<comment type="catalytic activity">
    <reaction evidence="2">
        <text>1-hexadecanoyl-2-(5Z,8Z,11Z,14Z-eicosatetraenoyl)-sn-glycero-3-phosphocholine + H2O = 1-hexadecanoyl-sn-glycero-3-phosphocholine + (5Z,8Z,11Z,14Z)-eicosatetraenoate + H(+)</text>
        <dbReference type="Rhea" id="RHEA:40427"/>
        <dbReference type="ChEBI" id="CHEBI:15377"/>
        <dbReference type="ChEBI" id="CHEBI:15378"/>
        <dbReference type="ChEBI" id="CHEBI:32395"/>
        <dbReference type="ChEBI" id="CHEBI:72998"/>
        <dbReference type="ChEBI" id="CHEBI:73003"/>
    </reaction>
    <physiologicalReaction direction="left-to-right" evidence="2">
        <dbReference type="Rhea" id="RHEA:40428"/>
    </physiologicalReaction>
</comment>
<comment type="catalytic activity">
    <reaction evidence="2">
        <text>1-octadecanoyl-2-(9Z-octadecenoyl)-sn-glycero-3-phosphocholine + H2O = 1-octadecanoyl-sn-glycero-3-phosphocholine + (9Z)-octadecenoate + H(+)</text>
        <dbReference type="Rhea" id="RHEA:40819"/>
        <dbReference type="ChEBI" id="CHEBI:15377"/>
        <dbReference type="ChEBI" id="CHEBI:15378"/>
        <dbReference type="ChEBI" id="CHEBI:30823"/>
        <dbReference type="ChEBI" id="CHEBI:73858"/>
        <dbReference type="ChEBI" id="CHEBI:75034"/>
    </reaction>
    <physiologicalReaction direction="left-to-right" evidence="2">
        <dbReference type="Rhea" id="RHEA:40820"/>
    </physiologicalReaction>
</comment>
<comment type="catalytic activity">
    <reaction evidence="2">
        <text>1-hexadecanoyl-2-(9Z-octadecenoyl)-sn-glycero-3-phosphocholine + H2O = 1-hexadecanoyl-sn-glycero-3-phosphocholine + (9Z)-octadecenoate + H(+)</text>
        <dbReference type="Rhea" id="RHEA:38779"/>
        <dbReference type="ChEBI" id="CHEBI:15377"/>
        <dbReference type="ChEBI" id="CHEBI:15378"/>
        <dbReference type="ChEBI" id="CHEBI:30823"/>
        <dbReference type="ChEBI" id="CHEBI:72998"/>
        <dbReference type="ChEBI" id="CHEBI:73001"/>
    </reaction>
    <physiologicalReaction direction="left-to-right" evidence="2">
        <dbReference type="Rhea" id="RHEA:38780"/>
    </physiologicalReaction>
</comment>
<comment type="catalytic activity">
    <reaction evidence="2">
        <text>1-hexadecanoyl-2-(9Z,12Z-octadecadienoyl)-sn-glycero-3-phosphocholine + H2O = (9Z,12Z)-octadecadienoate + 1-hexadecanoyl-sn-glycero-3-phosphocholine + H(+)</text>
        <dbReference type="Rhea" id="RHEA:40811"/>
        <dbReference type="ChEBI" id="CHEBI:15377"/>
        <dbReference type="ChEBI" id="CHEBI:15378"/>
        <dbReference type="ChEBI" id="CHEBI:30245"/>
        <dbReference type="ChEBI" id="CHEBI:72998"/>
        <dbReference type="ChEBI" id="CHEBI:73002"/>
    </reaction>
    <physiologicalReaction direction="left-to-right" evidence="2">
        <dbReference type="Rhea" id="RHEA:40812"/>
    </physiologicalReaction>
</comment>
<comment type="catalytic activity">
    <reaction evidence="2">
        <text>1-acyl-2-(9Z,12Z)-octadecadienoyl-sn-glycero-3-phosphoethanolamine + H2O = a 1-acyl-sn-glycero-3-phosphoethanolamine + (9Z,12Z)-octadecadienoate + H(+)</text>
        <dbReference type="Rhea" id="RHEA:40639"/>
        <dbReference type="ChEBI" id="CHEBI:15377"/>
        <dbReference type="ChEBI" id="CHEBI:15378"/>
        <dbReference type="ChEBI" id="CHEBI:30245"/>
        <dbReference type="ChEBI" id="CHEBI:64381"/>
        <dbReference type="ChEBI" id="CHEBI:75069"/>
    </reaction>
    <physiologicalReaction direction="left-to-right" evidence="2">
        <dbReference type="Rhea" id="RHEA:40640"/>
    </physiologicalReaction>
</comment>
<comment type="catalytic activity">
    <reaction evidence="2">
        <text>1-acyl-2-(5Z,8Z,11Z,14Z)-eicosatetraenoyl-sn-glycero-3-phosphoethanolamine + H2O = a 1-acyl-sn-glycero-3-phosphoethanolamine + (5Z,8Z,11Z,14Z)-eicosatetraenoate + H(+)</text>
        <dbReference type="Rhea" id="RHEA:40647"/>
        <dbReference type="ChEBI" id="CHEBI:15377"/>
        <dbReference type="ChEBI" id="CHEBI:15378"/>
        <dbReference type="ChEBI" id="CHEBI:32395"/>
        <dbReference type="ChEBI" id="CHEBI:64381"/>
        <dbReference type="ChEBI" id="CHEBI:75067"/>
    </reaction>
    <physiologicalReaction direction="left-to-right" evidence="2">
        <dbReference type="Rhea" id="RHEA:40648"/>
    </physiologicalReaction>
</comment>
<comment type="catalytic activity">
    <reaction evidence="2">
        <text>1-hexadecanoyl-2-(5Z,8Z,11Z,14Z-eicosatetraenoyl)-sn-glycero-3-phosphoethanolamine + H2O = 1-hexadecanoyl-sn-glycero-3-phosphoethanolamine + (5Z,8Z,11Z,14Z)-eicosatetraenoate + H(+)</text>
        <dbReference type="Rhea" id="RHEA:40431"/>
        <dbReference type="ChEBI" id="CHEBI:15377"/>
        <dbReference type="ChEBI" id="CHEBI:15378"/>
        <dbReference type="ChEBI" id="CHEBI:32395"/>
        <dbReference type="ChEBI" id="CHEBI:73004"/>
        <dbReference type="ChEBI" id="CHEBI:73009"/>
    </reaction>
    <physiologicalReaction direction="left-to-right" evidence="2">
        <dbReference type="Rhea" id="RHEA:40432"/>
    </physiologicalReaction>
</comment>
<comment type="catalytic activity">
    <reaction evidence="2">
        <text>1-hexadecanoyl-2-(5Z,8Z,11Z,14Z-eicosatetraenoyl)-sn-glycero-3-phosphocholine + H2O = 2-(5Z,8Z,11Z,14Z)-eicosatetraenoyl-sn-glycero-3-phosphocholine + hexadecanoate + H(+)</text>
        <dbReference type="Rhea" id="RHEA:40571"/>
        <dbReference type="ChEBI" id="CHEBI:7896"/>
        <dbReference type="ChEBI" id="CHEBI:15377"/>
        <dbReference type="ChEBI" id="CHEBI:15378"/>
        <dbReference type="ChEBI" id="CHEBI:73003"/>
        <dbReference type="ChEBI" id="CHEBI:76079"/>
    </reaction>
    <physiologicalReaction direction="left-to-right" evidence="2">
        <dbReference type="Rhea" id="RHEA:40572"/>
    </physiologicalReaction>
</comment>
<comment type="catalytic activity">
    <reaction evidence="2">
        <text>1-octadecanoyl-2-(9Z-octadecenoyl)-sn-glycero-3-phosphocholine + H2O = 2-(9Z-octadecenoyl)-sn-glycero-3-phosphocholine + octadecanoate + H(+)</text>
        <dbReference type="Rhea" id="RHEA:40823"/>
        <dbReference type="ChEBI" id="CHEBI:15377"/>
        <dbReference type="ChEBI" id="CHEBI:15378"/>
        <dbReference type="ChEBI" id="CHEBI:25629"/>
        <dbReference type="ChEBI" id="CHEBI:75034"/>
        <dbReference type="ChEBI" id="CHEBI:76071"/>
    </reaction>
    <physiologicalReaction direction="left-to-right" evidence="2">
        <dbReference type="Rhea" id="RHEA:40824"/>
    </physiologicalReaction>
</comment>
<comment type="catalytic activity">
    <reaction evidence="2">
        <text>1-hexadecanoyl-2-(4Z,7Z,10Z,13Z,16Z,19Z-docosahexaenoyl)-sn-glycero-3-phosphocholine + H2O = 2-(4Z,7Z,10Z,13Z,16Z,19Z-docosahexaenoyl)-sn-glycero-3-phosphocholine + hexadecanoate + H(+)</text>
        <dbReference type="Rhea" id="RHEA:41063"/>
        <dbReference type="ChEBI" id="CHEBI:7896"/>
        <dbReference type="ChEBI" id="CHEBI:15377"/>
        <dbReference type="ChEBI" id="CHEBI:15378"/>
        <dbReference type="ChEBI" id="CHEBI:74963"/>
        <dbReference type="ChEBI" id="CHEBI:76085"/>
    </reaction>
    <physiologicalReaction direction="left-to-right" evidence="2">
        <dbReference type="Rhea" id="RHEA:41064"/>
    </physiologicalReaction>
</comment>
<comment type="catalytic activity">
    <reaction evidence="2">
        <text>1-O-(1Z)-hexadecenyl-2 (5Z,8Z,11Z,14Z)-eicosatetraenoyl-sn-glycero-3-phosphocholine + H2O = 1-(1Z-hexadecenyl)-sn-glycero-3-phosphocholine + (5Z,8Z,11Z,14Z)-eicosatetraenoate + H(+)</text>
        <dbReference type="Rhea" id="RHEA:40579"/>
        <dbReference type="ChEBI" id="CHEBI:15377"/>
        <dbReference type="ChEBI" id="CHEBI:15378"/>
        <dbReference type="ChEBI" id="CHEBI:32395"/>
        <dbReference type="ChEBI" id="CHEBI:73850"/>
        <dbReference type="ChEBI" id="CHEBI:77292"/>
    </reaction>
    <physiologicalReaction direction="left-to-right" evidence="2">
        <dbReference type="Rhea" id="RHEA:40580"/>
    </physiologicalReaction>
</comment>
<comment type="catalytic activity">
    <reaction evidence="2">
        <text>1-O-(1Z-hexadecenyl)-2-(9Z-octadecenoyl)-sn-glycero-3-phosphocholine + H2O = 1-(1Z-hexadecenyl)-sn-glycero-3-phosphocholine + (9Z)-octadecenoate + H(+)</text>
        <dbReference type="Rhea" id="RHEA:67156"/>
        <dbReference type="ChEBI" id="CHEBI:15377"/>
        <dbReference type="ChEBI" id="CHEBI:15378"/>
        <dbReference type="ChEBI" id="CHEBI:30823"/>
        <dbReference type="ChEBI" id="CHEBI:73850"/>
        <dbReference type="ChEBI" id="CHEBI:86232"/>
    </reaction>
    <physiologicalReaction direction="left-to-right" evidence="2">
        <dbReference type="Rhea" id="RHEA:67157"/>
    </physiologicalReaction>
</comment>
<comment type="catalytic activity">
    <reaction evidence="2">
        <text>1-hexadecanoyl-sn-glycero-3-phosphocholine + H2O = sn-glycerol 3-phosphocholine + hexadecanoate + H(+)</text>
        <dbReference type="Rhea" id="RHEA:40435"/>
        <dbReference type="ChEBI" id="CHEBI:7896"/>
        <dbReference type="ChEBI" id="CHEBI:15377"/>
        <dbReference type="ChEBI" id="CHEBI:15378"/>
        <dbReference type="ChEBI" id="CHEBI:16870"/>
        <dbReference type="ChEBI" id="CHEBI:72998"/>
    </reaction>
    <physiologicalReaction direction="left-to-right" evidence="2">
        <dbReference type="Rhea" id="RHEA:40436"/>
    </physiologicalReaction>
</comment>
<comment type="catalytic activity">
    <reaction evidence="2">
        <text>1',3'-bis-[1,2-di-(9Z,12Z-octadecadienoyl)-sn-glycero-3-phospho]-glycerol + H2O = 1'-[1,2-di-(9Z,12Z-octadecadienoyl)-sn-glycero-3-phospho]-3'-[1-(9Z,12Z-octadecadienoyl)-sn-glycero-3-phospho]-glycerol + (9Z,12Z)-octadecadienoate + H(+)</text>
        <dbReference type="Rhea" id="RHEA:52812"/>
        <dbReference type="ChEBI" id="CHEBI:15377"/>
        <dbReference type="ChEBI" id="CHEBI:15378"/>
        <dbReference type="ChEBI" id="CHEBI:30245"/>
        <dbReference type="ChEBI" id="CHEBI:83580"/>
        <dbReference type="ChEBI" id="CHEBI:83581"/>
    </reaction>
    <physiologicalReaction direction="left-to-right" evidence="2">
        <dbReference type="Rhea" id="RHEA:52813"/>
    </physiologicalReaction>
</comment>
<comment type="catalytic activity">
    <reaction evidence="2">
        <text>1'-[1-acyl-2-(9-hydroxy-(10E,12Z)-octadecadienoyl)-sn-glycero-3-phospho]-3'-[1,2-diacyl-sn-glycero-3-phospho]-glycerol + H2O = 9-hydroxy-(10E,12Z)-octadecadienoate + 1'-[1,2-diacyl-sn-glycero-3-phospho],3'-[1-acyl-sn-glycero-3-phospho]-glycerol + H(+)</text>
        <dbReference type="Rhea" id="RHEA:67272"/>
        <dbReference type="ChEBI" id="CHEBI:15377"/>
        <dbReference type="ChEBI" id="CHEBI:15378"/>
        <dbReference type="ChEBI" id="CHEBI:64743"/>
        <dbReference type="ChEBI" id="CHEBI:133820"/>
        <dbReference type="ChEBI" id="CHEBI:167908"/>
    </reaction>
    <physiologicalReaction direction="left-to-right" evidence="2">
        <dbReference type="Rhea" id="RHEA:67273"/>
    </physiologicalReaction>
</comment>
<comment type="activity regulation">
    <text evidence="2">Calcium-independent phospholipase.</text>
</comment>
<comment type="pathway">
    <text evidence="2">Phospholipid metabolism.</text>
</comment>
<comment type="subcellular location">
    <subcellularLocation>
        <location evidence="6">Endoplasmic reticulum membrane</location>
        <topology evidence="9">Single-pass membrane protein</topology>
    </subcellularLocation>
    <subcellularLocation>
        <location evidence="2">Mitochondrion membrane</location>
        <topology evidence="9">Single-pass membrane protein</topology>
    </subcellularLocation>
    <subcellularLocation>
        <location evidence="2">Peroxisome membrane</location>
        <topology evidence="9">Single-pass membrane protein</topology>
    </subcellularLocation>
</comment>
<comment type="tissue specificity">
    <text evidence="6">Expressed in kidney, heart and brain.</text>
</comment>
<accession>Q5XTS1</accession>